<protein>
    <recommendedName>
        <fullName evidence="1">Pantothenate synthetase</fullName>
        <shortName evidence="1">PS</shortName>
        <ecNumber evidence="1">6.3.2.1</ecNumber>
    </recommendedName>
    <alternativeName>
        <fullName evidence="1">Pantoate--beta-alanine ligase</fullName>
    </alternativeName>
    <alternativeName>
        <fullName evidence="1">Pantoate-activating enzyme</fullName>
    </alternativeName>
</protein>
<organism>
    <name type="scientific">Xylella fastidiosa (strain M12)</name>
    <dbReference type="NCBI Taxonomy" id="405440"/>
    <lineage>
        <taxon>Bacteria</taxon>
        <taxon>Pseudomonadati</taxon>
        <taxon>Pseudomonadota</taxon>
        <taxon>Gammaproteobacteria</taxon>
        <taxon>Lysobacterales</taxon>
        <taxon>Lysobacteraceae</taxon>
        <taxon>Xylella</taxon>
    </lineage>
</organism>
<proteinExistence type="inferred from homology"/>
<dbReference type="EC" id="6.3.2.1" evidence="1"/>
<dbReference type="EMBL" id="CP000941">
    <property type="protein sequence ID" value="ACA11231.1"/>
    <property type="molecule type" value="Genomic_DNA"/>
</dbReference>
<dbReference type="RefSeq" id="WP_004086273.1">
    <property type="nucleotide sequence ID" value="NC_010513.1"/>
</dbReference>
<dbReference type="SMR" id="B0U1Q3"/>
<dbReference type="KEGG" id="xfm:Xfasm12_0198"/>
<dbReference type="HOGENOM" id="CLU_047148_0_0_6"/>
<dbReference type="UniPathway" id="UPA00028">
    <property type="reaction ID" value="UER00005"/>
</dbReference>
<dbReference type="GO" id="GO:0005829">
    <property type="term" value="C:cytosol"/>
    <property type="evidence" value="ECO:0007669"/>
    <property type="project" value="TreeGrafter"/>
</dbReference>
<dbReference type="GO" id="GO:0005524">
    <property type="term" value="F:ATP binding"/>
    <property type="evidence" value="ECO:0007669"/>
    <property type="project" value="UniProtKB-KW"/>
</dbReference>
<dbReference type="GO" id="GO:0004592">
    <property type="term" value="F:pantoate-beta-alanine ligase activity"/>
    <property type="evidence" value="ECO:0007669"/>
    <property type="project" value="UniProtKB-UniRule"/>
</dbReference>
<dbReference type="GO" id="GO:0015940">
    <property type="term" value="P:pantothenate biosynthetic process"/>
    <property type="evidence" value="ECO:0007669"/>
    <property type="project" value="UniProtKB-UniRule"/>
</dbReference>
<dbReference type="CDD" id="cd00560">
    <property type="entry name" value="PanC"/>
    <property type="match status" value="1"/>
</dbReference>
<dbReference type="FunFam" id="3.40.50.620:FF:000114">
    <property type="entry name" value="Pantothenate synthetase"/>
    <property type="match status" value="1"/>
</dbReference>
<dbReference type="Gene3D" id="3.40.50.620">
    <property type="entry name" value="HUPs"/>
    <property type="match status" value="1"/>
</dbReference>
<dbReference type="Gene3D" id="3.30.1300.10">
    <property type="entry name" value="Pantoate-beta-alanine ligase, C-terminal domain"/>
    <property type="match status" value="1"/>
</dbReference>
<dbReference type="HAMAP" id="MF_00158">
    <property type="entry name" value="PanC"/>
    <property type="match status" value="1"/>
</dbReference>
<dbReference type="InterPro" id="IPR003721">
    <property type="entry name" value="Pantoate_ligase"/>
</dbReference>
<dbReference type="InterPro" id="IPR042176">
    <property type="entry name" value="Pantoate_ligase_C"/>
</dbReference>
<dbReference type="InterPro" id="IPR014729">
    <property type="entry name" value="Rossmann-like_a/b/a_fold"/>
</dbReference>
<dbReference type="NCBIfam" id="TIGR00018">
    <property type="entry name" value="panC"/>
    <property type="match status" value="1"/>
</dbReference>
<dbReference type="PANTHER" id="PTHR21299">
    <property type="entry name" value="CYTIDYLATE KINASE/PANTOATE-BETA-ALANINE LIGASE"/>
    <property type="match status" value="1"/>
</dbReference>
<dbReference type="PANTHER" id="PTHR21299:SF1">
    <property type="entry name" value="PANTOATE--BETA-ALANINE LIGASE"/>
    <property type="match status" value="1"/>
</dbReference>
<dbReference type="Pfam" id="PF02569">
    <property type="entry name" value="Pantoate_ligase"/>
    <property type="match status" value="1"/>
</dbReference>
<dbReference type="SUPFAM" id="SSF52374">
    <property type="entry name" value="Nucleotidylyl transferase"/>
    <property type="match status" value="1"/>
</dbReference>
<gene>
    <name evidence="1" type="primary">panC</name>
    <name type="ordered locus">Xfasm12_0198</name>
</gene>
<evidence type="ECO:0000255" key="1">
    <source>
        <dbReference type="HAMAP-Rule" id="MF_00158"/>
    </source>
</evidence>
<keyword id="KW-0067">ATP-binding</keyword>
<keyword id="KW-0963">Cytoplasm</keyword>
<keyword id="KW-0436">Ligase</keyword>
<keyword id="KW-0547">Nucleotide-binding</keyword>
<keyword id="KW-0566">Pantothenate biosynthesis</keyword>
<feature type="chain" id="PRO_1000097131" description="Pantothenate synthetase">
    <location>
        <begin position="1"/>
        <end position="281"/>
    </location>
</feature>
<feature type="active site" description="Proton donor" evidence="1">
    <location>
        <position position="38"/>
    </location>
</feature>
<feature type="binding site" evidence="1">
    <location>
        <begin position="31"/>
        <end position="38"/>
    </location>
    <ligand>
        <name>ATP</name>
        <dbReference type="ChEBI" id="CHEBI:30616"/>
    </ligand>
</feature>
<feature type="binding site" evidence="1">
    <location>
        <position position="62"/>
    </location>
    <ligand>
        <name>(R)-pantoate</name>
        <dbReference type="ChEBI" id="CHEBI:15980"/>
    </ligand>
</feature>
<feature type="binding site" evidence="1">
    <location>
        <position position="62"/>
    </location>
    <ligand>
        <name>beta-alanine</name>
        <dbReference type="ChEBI" id="CHEBI:57966"/>
    </ligand>
</feature>
<feature type="binding site" evidence="1">
    <location>
        <begin position="150"/>
        <end position="153"/>
    </location>
    <ligand>
        <name>ATP</name>
        <dbReference type="ChEBI" id="CHEBI:30616"/>
    </ligand>
</feature>
<feature type="binding site" evidence="1">
    <location>
        <position position="156"/>
    </location>
    <ligand>
        <name>(R)-pantoate</name>
        <dbReference type="ChEBI" id="CHEBI:15980"/>
    </ligand>
</feature>
<feature type="binding site" evidence="1">
    <location>
        <position position="179"/>
    </location>
    <ligand>
        <name>ATP</name>
        <dbReference type="ChEBI" id="CHEBI:30616"/>
    </ligand>
</feature>
<feature type="binding site" evidence="1">
    <location>
        <begin position="187"/>
        <end position="190"/>
    </location>
    <ligand>
        <name>ATP</name>
        <dbReference type="ChEBI" id="CHEBI:30616"/>
    </ligand>
</feature>
<sequence length="281" mass="31143">MIDTVTDLSRLRGIVADWRRQGLRVALVPTMGNLHAGHFSLVMLARHYADRVVSSVFVNPTQFGPHEDFQRYPRTPEADMRGLENVGCDVLWLPSVETMYPLGTERTVRLFVPCVSDVLEGTFRPGHFEGVCTVVARLFNQVLPDVAVFGKKDYQQLVVIRQMVVDLAFPIEILGGCIVRESDGLAMSSRNQYLSMQQRPQAAEIHRTLIAMRDAVMSGGVHADVEAEAVRRLEAAGFQVDYAVIRLSDLGEPIDGIVISPGIALVAARLGNTRLIDNLEF</sequence>
<comment type="function">
    <text evidence="1">Catalyzes the condensation of pantoate with beta-alanine in an ATP-dependent reaction via a pantoyl-adenylate intermediate.</text>
</comment>
<comment type="catalytic activity">
    <reaction evidence="1">
        <text>(R)-pantoate + beta-alanine + ATP = (R)-pantothenate + AMP + diphosphate + H(+)</text>
        <dbReference type="Rhea" id="RHEA:10912"/>
        <dbReference type="ChEBI" id="CHEBI:15378"/>
        <dbReference type="ChEBI" id="CHEBI:15980"/>
        <dbReference type="ChEBI" id="CHEBI:29032"/>
        <dbReference type="ChEBI" id="CHEBI:30616"/>
        <dbReference type="ChEBI" id="CHEBI:33019"/>
        <dbReference type="ChEBI" id="CHEBI:57966"/>
        <dbReference type="ChEBI" id="CHEBI:456215"/>
        <dbReference type="EC" id="6.3.2.1"/>
    </reaction>
</comment>
<comment type="pathway">
    <text evidence="1">Cofactor biosynthesis; (R)-pantothenate biosynthesis; (R)-pantothenate from (R)-pantoate and beta-alanine: step 1/1.</text>
</comment>
<comment type="subunit">
    <text evidence="1">Homodimer.</text>
</comment>
<comment type="subcellular location">
    <subcellularLocation>
        <location evidence="1">Cytoplasm</location>
    </subcellularLocation>
</comment>
<comment type="miscellaneous">
    <text evidence="1">The reaction proceeds by a bi uni uni bi ping pong mechanism.</text>
</comment>
<comment type="similarity">
    <text evidence="1">Belongs to the pantothenate synthetase family.</text>
</comment>
<name>PANC_XYLFM</name>
<reference key="1">
    <citation type="journal article" date="2010" name="J. Bacteriol.">
        <title>Whole genome sequences of two Xylella fastidiosa strains (M12 and M23) causing almond leaf scorch disease in California.</title>
        <authorList>
            <person name="Chen J."/>
            <person name="Xie G."/>
            <person name="Han S."/>
            <person name="Chertkov O."/>
            <person name="Sims D."/>
            <person name="Civerolo E.L."/>
        </authorList>
    </citation>
    <scope>NUCLEOTIDE SEQUENCE [LARGE SCALE GENOMIC DNA]</scope>
    <source>
        <strain>M12</strain>
    </source>
</reference>
<accession>B0U1Q3</accession>